<feature type="chain" id="PRO_0000247683" description="NADPH-dependent 7-cyano-7-deazaguanine reductase">
    <location>
        <begin position="1"/>
        <end position="158"/>
    </location>
</feature>
<feature type="active site" description="Thioimide intermediate" evidence="1">
    <location>
        <position position="56"/>
    </location>
</feature>
<feature type="active site" description="Proton donor" evidence="1">
    <location>
        <position position="63"/>
    </location>
</feature>
<feature type="binding site" evidence="1">
    <location>
        <begin position="78"/>
        <end position="80"/>
    </location>
    <ligand>
        <name>substrate</name>
    </ligand>
</feature>
<feature type="binding site" evidence="1">
    <location>
        <begin position="97"/>
        <end position="98"/>
    </location>
    <ligand>
        <name>substrate</name>
    </ligand>
</feature>
<name>QUEF_NITWN</name>
<organism>
    <name type="scientific">Nitrobacter winogradskyi (strain ATCC 25391 / DSM 10237 / CIP 104748 / NCIMB 11846 / Nb-255)</name>
    <dbReference type="NCBI Taxonomy" id="323098"/>
    <lineage>
        <taxon>Bacteria</taxon>
        <taxon>Pseudomonadati</taxon>
        <taxon>Pseudomonadota</taxon>
        <taxon>Alphaproteobacteria</taxon>
        <taxon>Hyphomicrobiales</taxon>
        <taxon>Nitrobacteraceae</taxon>
        <taxon>Nitrobacter</taxon>
    </lineage>
</organism>
<evidence type="ECO:0000255" key="1">
    <source>
        <dbReference type="HAMAP-Rule" id="MF_00818"/>
    </source>
</evidence>
<sequence length="158" mass="17507">MPRKPPSSPKSSPLQLGRAVAWPDSPEQAKLDRVPNPQKGTNYVARFTAPEFTALCPVTGQPDFAHLVIDYVPGSWLLESKSLKLYLASFRNHGAFHEDCTVAIGKRIVAAIKPKWLRIGGYWFPRGGIPIDVFWQTGAAPRGVWIPDQDVPSYRGRG</sequence>
<gene>
    <name evidence="1" type="primary">queF</name>
    <name type="ordered locus">Nwi_1828</name>
</gene>
<dbReference type="EC" id="1.7.1.13" evidence="1"/>
<dbReference type="EMBL" id="CP000115">
    <property type="protein sequence ID" value="ABA05088.1"/>
    <property type="molecule type" value="Genomic_DNA"/>
</dbReference>
<dbReference type="RefSeq" id="WP_011315084.1">
    <property type="nucleotide sequence ID" value="NC_007406.1"/>
</dbReference>
<dbReference type="SMR" id="Q3SRK3"/>
<dbReference type="STRING" id="323098.Nwi_1828"/>
<dbReference type="KEGG" id="nwi:Nwi_1828"/>
<dbReference type="eggNOG" id="COG0780">
    <property type="taxonomic scope" value="Bacteria"/>
</dbReference>
<dbReference type="HOGENOM" id="CLU_102489_0_1_5"/>
<dbReference type="OrthoDB" id="9789995at2"/>
<dbReference type="UniPathway" id="UPA00392"/>
<dbReference type="Proteomes" id="UP000002531">
    <property type="component" value="Chromosome"/>
</dbReference>
<dbReference type="GO" id="GO:0005737">
    <property type="term" value="C:cytoplasm"/>
    <property type="evidence" value="ECO:0007669"/>
    <property type="project" value="UniProtKB-SubCell"/>
</dbReference>
<dbReference type="GO" id="GO:0033739">
    <property type="term" value="F:preQ1 synthase activity"/>
    <property type="evidence" value="ECO:0007669"/>
    <property type="project" value="UniProtKB-UniRule"/>
</dbReference>
<dbReference type="GO" id="GO:0008616">
    <property type="term" value="P:queuosine biosynthetic process"/>
    <property type="evidence" value="ECO:0007669"/>
    <property type="project" value="UniProtKB-UniRule"/>
</dbReference>
<dbReference type="GO" id="GO:0006400">
    <property type="term" value="P:tRNA modification"/>
    <property type="evidence" value="ECO:0007669"/>
    <property type="project" value="UniProtKB-UniRule"/>
</dbReference>
<dbReference type="Gene3D" id="3.30.1130.10">
    <property type="match status" value="1"/>
</dbReference>
<dbReference type="HAMAP" id="MF_00818">
    <property type="entry name" value="QueF_type1"/>
    <property type="match status" value="1"/>
</dbReference>
<dbReference type="InterPro" id="IPR043133">
    <property type="entry name" value="GTP-CH-I_C/QueF"/>
</dbReference>
<dbReference type="InterPro" id="IPR050084">
    <property type="entry name" value="NADPH_dep_7-cyano-7-deazaG_red"/>
</dbReference>
<dbReference type="InterPro" id="IPR029500">
    <property type="entry name" value="QueF"/>
</dbReference>
<dbReference type="InterPro" id="IPR016856">
    <property type="entry name" value="QueF_type1"/>
</dbReference>
<dbReference type="NCBIfam" id="TIGR03139">
    <property type="entry name" value="QueF-II"/>
    <property type="match status" value="1"/>
</dbReference>
<dbReference type="PANTHER" id="PTHR34354">
    <property type="entry name" value="NADPH-DEPENDENT 7-CYANO-7-DEAZAGUANINE REDUCTASE"/>
    <property type="match status" value="1"/>
</dbReference>
<dbReference type="PANTHER" id="PTHR34354:SF1">
    <property type="entry name" value="NADPH-DEPENDENT 7-CYANO-7-DEAZAGUANINE REDUCTASE"/>
    <property type="match status" value="1"/>
</dbReference>
<dbReference type="Pfam" id="PF14489">
    <property type="entry name" value="QueF"/>
    <property type="match status" value="1"/>
</dbReference>
<dbReference type="SUPFAM" id="SSF55620">
    <property type="entry name" value="Tetrahydrobiopterin biosynthesis enzymes-like"/>
    <property type="match status" value="1"/>
</dbReference>
<proteinExistence type="inferred from homology"/>
<accession>Q3SRK3</accession>
<reference key="1">
    <citation type="journal article" date="2006" name="Appl. Environ. Microbiol.">
        <title>Genome sequence of the chemolithoautotrophic nitrite-oxidizing bacterium Nitrobacter winogradskyi Nb-255.</title>
        <authorList>
            <person name="Starkenburg S.R."/>
            <person name="Chain P.S.G."/>
            <person name="Sayavedra-Soto L.A."/>
            <person name="Hauser L."/>
            <person name="Land M.L."/>
            <person name="Larimer F.W."/>
            <person name="Malfatti S.A."/>
            <person name="Klotz M.G."/>
            <person name="Bottomley P.J."/>
            <person name="Arp D.J."/>
            <person name="Hickey W.J."/>
        </authorList>
    </citation>
    <scope>NUCLEOTIDE SEQUENCE [LARGE SCALE GENOMIC DNA]</scope>
    <source>
        <strain>ATCC 25391 / DSM 10237 / CIP 104748 / NCIMB 11846 / Nb-255</strain>
    </source>
</reference>
<keyword id="KW-0963">Cytoplasm</keyword>
<keyword id="KW-0521">NADP</keyword>
<keyword id="KW-0560">Oxidoreductase</keyword>
<keyword id="KW-0671">Queuosine biosynthesis</keyword>
<keyword id="KW-1185">Reference proteome</keyword>
<protein>
    <recommendedName>
        <fullName evidence="1">NADPH-dependent 7-cyano-7-deazaguanine reductase</fullName>
        <ecNumber evidence="1">1.7.1.13</ecNumber>
    </recommendedName>
    <alternativeName>
        <fullName evidence="1">7-cyano-7-carbaguanine reductase</fullName>
    </alternativeName>
    <alternativeName>
        <fullName evidence="1">NADPH-dependent nitrile oxidoreductase</fullName>
    </alternativeName>
    <alternativeName>
        <fullName evidence="1">PreQ(0) reductase</fullName>
    </alternativeName>
</protein>
<comment type="function">
    <text evidence="1">Catalyzes the NADPH-dependent reduction of 7-cyano-7-deazaguanine (preQ0) to 7-aminomethyl-7-deazaguanine (preQ1).</text>
</comment>
<comment type="catalytic activity">
    <reaction evidence="1">
        <text>7-aminomethyl-7-carbaguanine + 2 NADP(+) = 7-cyano-7-deazaguanine + 2 NADPH + 3 H(+)</text>
        <dbReference type="Rhea" id="RHEA:13409"/>
        <dbReference type="ChEBI" id="CHEBI:15378"/>
        <dbReference type="ChEBI" id="CHEBI:45075"/>
        <dbReference type="ChEBI" id="CHEBI:57783"/>
        <dbReference type="ChEBI" id="CHEBI:58349"/>
        <dbReference type="ChEBI" id="CHEBI:58703"/>
        <dbReference type="EC" id="1.7.1.13"/>
    </reaction>
</comment>
<comment type="pathway">
    <text evidence="1">tRNA modification; tRNA-queuosine biosynthesis.</text>
</comment>
<comment type="subcellular location">
    <subcellularLocation>
        <location evidence="1">Cytoplasm</location>
    </subcellularLocation>
</comment>
<comment type="similarity">
    <text evidence="1">Belongs to the GTP cyclohydrolase I family. QueF type 1 subfamily.</text>
</comment>